<accession>Q9NIW4</accession>
<gene>
    <name evidence="8" type="primary">tra-2</name>
</gene>
<feature type="signal peptide" evidence="3">
    <location>
        <begin position="1"/>
        <end position="28"/>
    </location>
</feature>
<feature type="chain" id="PRO_0000022576" description="Sex-determining transformer protein 2" evidence="3">
    <location>
        <begin position="29"/>
        <end position="1485"/>
    </location>
</feature>
<feature type="transmembrane region" description="Helical" evidence="3">
    <location>
        <begin position="438"/>
        <end position="458"/>
    </location>
</feature>
<feature type="transmembrane region" description="Helical" evidence="3">
    <location>
        <begin position="490"/>
        <end position="510"/>
    </location>
</feature>
<feature type="transmembrane region" description="Helical" evidence="3">
    <location>
        <begin position="584"/>
        <end position="604"/>
    </location>
</feature>
<feature type="transmembrane region" description="Helical" evidence="3">
    <location>
        <begin position="732"/>
        <end position="752"/>
    </location>
</feature>
<feature type="transmembrane region" description="Helical" evidence="3">
    <location>
        <begin position="923"/>
        <end position="943"/>
    </location>
</feature>
<feature type="transmembrane region" description="Helical" evidence="3">
    <location>
        <begin position="950"/>
        <end position="970"/>
    </location>
</feature>
<feature type="transmembrane region" description="Helical" evidence="3">
    <location>
        <begin position="980"/>
        <end position="1000"/>
    </location>
</feature>
<feature type="transmembrane region" description="Helical" evidence="3">
    <location>
        <begin position="1033"/>
        <end position="1053"/>
    </location>
</feature>
<feature type="transmembrane region" description="Helical" evidence="3">
    <location>
        <begin position="1063"/>
        <end position="1083"/>
    </location>
</feature>
<feature type="transmembrane region" description="Helical" evidence="3">
    <location>
        <begin position="1181"/>
        <end position="1201"/>
    </location>
</feature>
<feature type="region of interest" description="Interaction with fem-3" evidence="1">
    <location>
        <begin position="1131"/>
        <end position="1271"/>
    </location>
</feature>
<feature type="region of interest" description="Disordered" evidence="4">
    <location>
        <begin position="1143"/>
        <end position="1175"/>
    </location>
</feature>
<feature type="region of interest" description="Disordered" evidence="4">
    <location>
        <begin position="1228"/>
        <end position="1252"/>
    </location>
</feature>
<feature type="region of interest" description="Disordered" evidence="4">
    <location>
        <begin position="1275"/>
        <end position="1306"/>
    </location>
</feature>
<feature type="region of interest" description="Disordered" evidence="4">
    <location>
        <begin position="1348"/>
        <end position="1384"/>
    </location>
</feature>
<feature type="region of interest" description="MX regulatory domain; required for tra-1 binding" evidence="1">
    <location>
        <begin position="1401"/>
        <end position="1422"/>
    </location>
</feature>
<feature type="region of interest" description="Disordered" evidence="4">
    <location>
        <begin position="1442"/>
        <end position="1485"/>
    </location>
</feature>
<feature type="compositionally biased region" description="Basic and acidic residues" evidence="4">
    <location>
        <begin position="1275"/>
        <end position="1284"/>
    </location>
</feature>
<feature type="compositionally biased region" description="Basic and acidic residues" evidence="4">
    <location>
        <begin position="1456"/>
        <end position="1472"/>
    </location>
</feature>
<protein>
    <recommendedName>
        <fullName>Sex-determining transformer protein 2</fullName>
    </recommendedName>
    <alternativeName>
        <fullName>Cr-tra-2</fullName>
    </alternativeName>
</protein>
<reference evidence="7 8" key="1">
    <citation type="journal article" date="2000" name="Genetics">
        <title>Regulatory elements required for development of Caenorhabditis elegans hermaphrodites are conserved in the tra-2 homologue of C. remanei, a male/female sister species.</title>
        <authorList>
            <person name="Haag E.S."/>
            <person name="Kimble J."/>
        </authorList>
    </citation>
    <scope>NUCLEOTIDE SEQUENCE [GENOMIC DNA]</scope>
    <scope>FUNCTION</scope>
    <scope>TISSUE SPECIFICITY</scope>
    <source>
        <strain evidence="8">SB146</strain>
    </source>
</reference>
<reference evidence="7" key="2">
    <citation type="journal article" date="2002" name="Curr. Biol.">
        <title>Rapid coevolution of the nematode sex-determining genes fem-3 and tra-2.</title>
        <authorList>
            <person name="Haag E.S."/>
            <person name="Wang S."/>
            <person name="Kimble J."/>
        </authorList>
    </citation>
    <scope>FUNCTION</scope>
    <scope>INTERACTION WITH FEM-3</scope>
    <source>
        <strain evidence="6">SB146</strain>
    </source>
</reference>
<name>TRA2_CAERE</name>
<dbReference type="EMBL" id="AF187965">
    <property type="protein sequence ID" value="AAF71402.1"/>
    <property type="molecule type" value="Genomic_DNA"/>
</dbReference>
<dbReference type="SMR" id="Q9NIW4"/>
<dbReference type="IntAct" id="Q9NIW4">
    <property type="interactions" value="1"/>
</dbReference>
<dbReference type="eggNOG" id="ENOG502R9RT">
    <property type="taxonomic scope" value="Eukaryota"/>
</dbReference>
<dbReference type="HOGENOM" id="CLU_005001_0_0_1"/>
<dbReference type="GO" id="GO:0016020">
    <property type="term" value="C:membrane"/>
    <property type="evidence" value="ECO:0000314"/>
    <property type="project" value="UniProtKB"/>
</dbReference>
<dbReference type="GO" id="GO:0005886">
    <property type="term" value="C:plasma membrane"/>
    <property type="evidence" value="ECO:0007669"/>
    <property type="project" value="TreeGrafter"/>
</dbReference>
<dbReference type="GO" id="GO:0004888">
    <property type="term" value="F:transmembrane signaling receptor activity"/>
    <property type="evidence" value="ECO:0007669"/>
    <property type="project" value="InterPro"/>
</dbReference>
<dbReference type="GO" id="GO:0030154">
    <property type="term" value="P:cell differentiation"/>
    <property type="evidence" value="ECO:0007669"/>
    <property type="project" value="UniProtKB-KW"/>
</dbReference>
<dbReference type="GO" id="GO:0040021">
    <property type="term" value="P:hermaphrodite germ-line sex determination"/>
    <property type="evidence" value="ECO:0007669"/>
    <property type="project" value="InterPro"/>
</dbReference>
<dbReference type="GO" id="GO:0042001">
    <property type="term" value="P:hermaphrodite somatic sex determination"/>
    <property type="evidence" value="ECO:0007669"/>
    <property type="project" value="InterPro"/>
</dbReference>
<dbReference type="GO" id="GO:0007548">
    <property type="term" value="P:sex differentiation"/>
    <property type="evidence" value="ECO:0007669"/>
    <property type="project" value="UniProtKB-KW"/>
</dbReference>
<dbReference type="GO" id="GO:0007283">
    <property type="term" value="P:spermatogenesis"/>
    <property type="evidence" value="ECO:0007669"/>
    <property type="project" value="UniProtKB-KW"/>
</dbReference>
<dbReference type="InterPro" id="IPR032848">
    <property type="entry name" value="Ce-Tra-2"/>
</dbReference>
<dbReference type="PANTHER" id="PTHR39365">
    <property type="entry name" value="MX REGION OF TRA-2 RELATED-RELATED"/>
    <property type="match status" value="1"/>
</dbReference>
<dbReference type="PANTHER" id="PTHR39365:SF2">
    <property type="entry name" value="MX REGION OF TRA-2 RELATED-RELATED"/>
    <property type="match status" value="1"/>
</dbReference>
<proteinExistence type="evidence at protein level"/>
<keyword id="KW-0217">Developmental protein</keyword>
<keyword id="KW-0221">Differentiation</keyword>
<keyword id="KW-0472">Membrane</keyword>
<keyword id="KW-0675">Receptor</keyword>
<keyword id="KW-0726">Sexual differentiation</keyword>
<keyword id="KW-0732">Signal</keyword>
<keyword id="KW-0744">Spermatogenesis</keyword>
<keyword id="KW-0812">Transmembrane</keyword>
<keyword id="KW-1133">Transmembrane helix</keyword>
<organism>
    <name type="scientific">Caenorhabditis remanei</name>
    <name type="common">Caenorhabditis vulgaris</name>
    <dbReference type="NCBI Taxonomy" id="31234"/>
    <lineage>
        <taxon>Eukaryota</taxon>
        <taxon>Metazoa</taxon>
        <taxon>Ecdysozoa</taxon>
        <taxon>Nematoda</taxon>
        <taxon>Chromadorea</taxon>
        <taxon>Rhabditida</taxon>
        <taxon>Rhabditina</taxon>
        <taxon>Rhabditomorpha</taxon>
        <taxon>Rhabditoidea</taxon>
        <taxon>Rhabditidae</taxon>
        <taxon>Peloderinae</taxon>
        <taxon>Caenorhabditis</taxon>
    </lineage>
</organism>
<comment type="function">
    <text evidence="2 5 6">Plays a major role in controlling sexual cell fates. Promotes female development in XX animals where it sequesters one or more of the FEM proteins to the membrane thereby freeing the tra-1 protein (a putative transcription factor) to enter the nucleus and promote female development. In XO animals it acts as a receptor for her-1 which prevents it from binding to FEM proteins thereby repressing the activity of tra-1. Negatively regulates male development when bound to fem-3 and is required together with tra-1 for promoting spermatogenesis.</text>
</comment>
<comment type="subunit">
    <text evidence="2 6">Interacts with tra-1 and fem-3.</text>
</comment>
<comment type="subcellular location">
    <subcellularLocation>
        <location evidence="7">Membrane</location>
        <topology evidence="7">Multi-pass membrane protein</topology>
    </subcellularLocation>
</comment>
<comment type="tissue specificity">
    <text evidence="5">Somatic and germline tissues.</text>
</comment>
<comment type="miscellaneous">
    <text evidence="1">The MX region mediates a post-translational regulation, essential for the onset of hermaphrodite spermatogenesis.</text>
</comment>
<evidence type="ECO:0000250" key="1"/>
<evidence type="ECO:0000250" key="2">
    <source>
        <dbReference type="UniProtKB" id="P34709"/>
    </source>
</evidence>
<evidence type="ECO:0000255" key="3"/>
<evidence type="ECO:0000256" key="4">
    <source>
        <dbReference type="SAM" id="MobiDB-lite"/>
    </source>
</evidence>
<evidence type="ECO:0000269" key="5">
    <source>
    </source>
</evidence>
<evidence type="ECO:0000269" key="6">
    <source>
    </source>
</evidence>
<evidence type="ECO:0000305" key="7"/>
<evidence type="ECO:0000312" key="8">
    <source>
        <dbReference type="EMBL" id="AAF71402.1"/>
    </source>
</evidence>
<sequence>MSLRSNKLLVAAVIFTVVTFGLLLTSSIFNNKTTTSLTYGGILPKFGQRIIEKKSNEEYIIEKIEHTQKDGEDVRSTRYLTHHSYLLRNLAKMEVKHHGKDFSINDICYKPHNAIFETTFAPENIDKLPNYLQRLILEAQRLSPCLIVTPLNCYHDSYRIHSEMSKWNTSNVTNFLNRKLRNSYIDAIGESEERPYIKSTYGPDLIKEWAHLMFKLPSKQTSSFSKKDLSSKIELWLSSIESKTNLTELGRPSEVDNYFDICTSMQQVHDFDERKRKFGLYDDDDEFLIGLDCVENKTKFIEWIQERELRGVSKPFNPNQQCDGIFKNSEGLEFFYGTRSFGNNTAPFDKMKTEIGLMTPEQILTTMLHSDFVNGFESIWTIERAQELLDDFRLAIRQEVKRFNENRSSLKIGIDTRVVQREESNETELEISSNLDSVVYFILFIRCVLLIFFAFFAWSVNPLRSAVMFLVRDALTSLLFSILCKSDGQIELNSELLGYIILLTIVNTYLTTRVSWYKDRNETCIQRAKDFPSRSNFSLLFSIDSLRENCDSRQLQYALAKLSKYLTALDTYSTETFMQLPNYWPFISILFVPITGCYWYFVDINLPKISVVLLPSFIVATIEQRQVEKSLLKERKAKKEFQKVQKKKMEKFLSDGAVDRLLSGNSESVEDKKLYKSKDCVIHKESAGRLYELSRSSYDVSKIMAYPNQRVRDFRFDALGCYFWLMKLKSAGILLYGSAVLFVLLSVAVMLIPIQRTSLQKDMNNEVYFGFSINNMSSDWANINKNLHAFNSEIDSIQSLQTISNWKKGFDRFEGRFYKNSSRISDANDYVEWMNQEPINWSVMAPLTRISPKFGIPSPFKFRFRYQIEVNNNESEVIDTVQRIDTLLTKYKGTLSSPIVDGVLYEYYHGNAAVWNSFVFNELLASGILSAFFALIVVIFSITPSISSVLIFSFFVIGSRLEIAAVISLFSLDNQQLYTDSAVLVGFLVAWAPFYELSLFRRRLLYKLKTRCTPELSSGKRIRPPFTKAVDTAQVFAIVLAASLIIAVVAGVVPEFQKFFWPTVILIVVQLVAFGNSIAVLVATNQMFEREVRNFLDNEFELGNGTTAGQVCHMAQKLIPPKYDIPIPMNDFHIRPTNMSKFYAPPPAKKRAKQTNNETDPEKKEDEPGTSNANNVSQEEAAHRLAILPWHFVLGGIPVDLTTRSDQIINGPFIGISSDAMRTHEINSELEDQDDYSSESSVEDVESDPAPEEEIKYHEENMLHMIEKVQKDAAEKEAKEKVHQVESAQRRAPNFDDPNVAGPSHRYQRNEERISTDIVPADPPREIPANPVPPPTHVLVQRAPRPHEMPPVIDRTIPRDPRTEPPNLQECIQQNDDPSLPPHPRRHQYPDHYGRAMISYCEDVYWTYNDGRLPPNVAMPPRPFDWHYRRVAPPEDFNYVPPPGQPSIPIPAEAMALREERARAHREQEQRDNSQSPSPSPEPGL</sequence>